<keyword id="KW-1003">Cell membrane</keyword>
<keyword id="KW-1015">Disulfide bond</keyword>
<keyword id="KW-0325">Glycoprotein</keyword>
<keyword id="KW-0339">Growth factor</keyword>
<keyword id="KW-0472">Membrane</keyword>
<keyword id="KW-0479">Metal-binding</keyword>
<keyword id="KW-1185">Reference proteome</keyword>
<keyword id="KW-0677">Repeat</keyword>
<keyword id="KW-0732">Signal</keyword>
<keyword id="KW-0812">Transmembrane</keyword>
<keyword id="KW-1133">Transmembrane helix</keyword>
<sequence length="255" mass="26935">MNGWVARGLARRAAALGLGLRVLLCFGLCLEIAPTPIQTWSPTQAPGPSAGSCPPTNFQCRSDGRCLPLIWRCDVDQDCPDGSDEEECGTEVPNGSPSPCDIMDDCPDHNKNLLNCGPQSCPEGELCCPLDGVCIPSTWLCDGHRDCSDYSDELGCGTKTHEEGRTMSTGTPVTLENVTYLSNATVTAIEDWDSVQSGNRNVYGIIAAVAVLSISLAAGILFALSRLCAQGCLAPLGLLVSMKGSLQPEKKTSVL</sequence>
<accession>A6QNY1</accession>
<gene>
    <name type="primary">CD320</name>
</gene>
<comment type="function">
    <text evidence="1">Receptor for transcobalamin saturated with cobalamin (TCbl). Plays an important role in cobalamin uptake. Plasma membrane protein that is expressed on follicular dendritic cells (FDC) and mediates interaction with germinal center B cells. Functions as a costimulator to promote B cell responses to antigenic stimuli; promotes B cell differentiation and proliferation. Germinal center-B (GC-B) cells differentiate into memory B-cells and plasma cells (PC) through interaction with T-cells and follicular dendritic cells (FDC). CD320 augments the proliferation of PC precursors generated by IL-10.</text>
</comment>
<comment type="subunit">
    <text evidence="1">Interacts (via LDL-receptor class A domains) with TCN2.</text>
</comment>
<comment type="subcellular location">
    <subcellularLocation>
        <location evidence="1">Cell membrane</location>
        <topology evidence="1">Single-pass type I membrane protein</topology>
    </subcellularLocation>
</comment>
<comment type="sequence caution" evidence="4">
    <conflict type="erroneous initiation">
        <sequence resource="EMBL-CDS" id="AAI49058"/>
    </conflict>
</comment>
<proteinExistence type="evidence at transcript level"/>
<organism>
    <name type="scientific">Bos taurus</name>
    <name type="common">Bovine</name>
    <dbReference type="NCBI Taxonomy" id="9913"/>
    <lineage>
        <taxon>Eukaryota</taxon>
        <taxon>Metazoa</taxon>
        <taxon>Chordata</taxon>
        <taxon>Craniata</taxon>
        <taxon>Vertebrata</taxon>
        <taxon>Euteleostomi</taxon>
        <taxon>Mammalia</taxon>
        <taxon>Eutheria</taxon>
        <taxon>Laurasiatheria</taxon>
        <taxon>Artiodactyla</taxon>
        <taxon>Ruminantia</taxon>
        <taxon>Pecora</taxon>
        <taxon>Bovidae</taxon>
        <taxon>Bovinae</taxon>
        <taxon>Bos</taxon>
    </lineage>
</organism>
<protein>
    <recommendedName>
        <fullName>CD320 antigen</fullName>
    </recommendedName>
    <alternativeName>
        <fullName>Transcobalamin receptor</fullName>
        <shortName>TCblR</shortName>
    </alternativeName>
    <cdAntigenName>CD320</cdAntigenName>
</protein>
<dbReference type="EMBL" id="BC149057">
    <property type="protein sequence ID" value="AAI49058.1"/>
    <property type="status" value="ALT_INIT"/>
    <property type="molecule type" value="mRNA"/>
</dbReference>
<dbReference type="RefSeq" id="NP_001160030.1">
    <property type="nucleotide sequence ID" value="NM_001166558.1"/>
</dbReference>
<dbReference type="SMR" id="A6QNY1"/>
<dbReference type="FunCoup" id="A6QNY1">
    <property type="interactions" value="168"/>
</dbReference>
<dbReference type="STRING" id="9913.ENSBTAP00000005777"/>
<dbReference type="GlyCosmos" id="A6QNY1">
    <property type="glycosylation" value="2 sites, No reported glycans"/>
</dbReference>
<dbReference type="GlyGen" id="A6QNY1">
    <property type="glycosylation" value="2 sites"/>
</dbReference>
<dbReference type="PaxDb" id="9913-ENSBTAP00000005777"/>
<dbReference type="GeneID" id="505043"/>
<dbReference type="KEGG" id="bta:505043"/>
<dbReference type="CTD" id="51293"/>
<dbReference type="VEuPathDB" id="HostDB:ENSBTAG00000004403"/>
<dbReference type="eggNOG" id="KOG1215">
    <property type="taxonomic scope" value="Eukaryota"/>
</dbReference>
<dbReference type="HOGENOM" id="CLU_094249_0_0_1"/>
<dbReference type="InParanoid" id="A6QNY1"/>
<dbReference type="OMA" id="IKPCAQD"/>
<dbReference type="OrthoDB" id="9990982at2759"/>
<dbReference type="TreeFam" id="TF337215"/>
<dbReference type="Reactome" id="R-BTA-9758890">
    <property type="pathway name" value="Transport of RCbl within the body"/>
</dbReference>
<dbReference type="Proteomes" id="UP000009136">
    <property type="component" value="Chromosome 7"/>
</dbReference>
<dbReference type="Bgee" id="ENSBTAG00000004403">
    <property type="expression patterns" value="Expressed in digestive system secreted substance and 107 other cell types or tissues"/>
</dbReference>
<dbReference type="GO" id="GO:0005886">
    <property type="term" value="C:plasma membrane"/>
    <property type="evidence" value="ECO:0000250"/>
    <property type="project" value="UniProtKB"/>
</dbReference>
<dbReference type="GO" id="GO:0005509">
    <property type="term" value="F:calcium ion binding"/>
    <property type="evidence" value="ECO:0000250"/>
    <property type="project" value="UniProtKB"/>
</dbReference>
<dbReference type="GO" id="GO:0008083">
    <property type="term" value="F:growth factor activity"/>
    <property type="evidence" value="ECO:0007669"/>
    <property type="project" value="UniProtKB-KW"/>
</dbReference>
<dbReference type="GO" id="GO:0031296">
    <property type="term" value="P:B cell costimulation"/>
    <property type="evidence" value="ECO:0000250"/>
    <property type="project" value="UniProtKB"/>
</dbReference>
<dbReference type="GO" id="GO:0015889">
    <property type="term" value="P:cobalamin transport"/>
    <property type="evidence" value="ECO:0000250"/>
    <property type="project" value="UniProtKB"/>
</dbReference>
<dbReference type="GO" id="GO:0030890">
    <property type="term" value="P:positive regulation of B cell proliferation"/>
    <property type="evidence" value="ECO:0000250"/>
    <property type="project" value="UniProtKB"/>
</dbReference>
<dbReference type="GO" id="GO:0016192">
    <property type="term" value="P:vesicle-mediated transport"/>
    <property type="evidence" value="ECO:0007669"/>
    <property type="project" value="UniProtKB-ARBA"/>
</dbReference>
<dbReference type="CDD" id="cd00112">
    <property type="entry name" value="LDLa"/>
    <property type="match status" value="2"/>
</dbReference>
<dbReference type="FunFam" id="4.10.400.10:FF:000002">
    <property type="entry name" value="Low-density lipoprotein receptor-related protein 1"/>
    <property type="match status" value="2"/>
</dbReference>
<dbReference type="Gene3D" id="4.10.400.10">
    <property type="entry name" value="Low-density Lipoprotein Receptor"/>
    <property type="match status" value="2"/>
</dbReference>
<dbReference type="InterPro" id="IPR036055">
    <property type="entry name" value="LDL_receptor-like_sf"/>
</dbReference>
<dbReference type="InterPro" id="IPR050685">
    <property type="entry name" value="LDLR"/>
</dbReference>
<dbReference type="InterPro" id="IPR023415">
    <property type="entry name" value="LDLR_class-A_CS"/>
</dbReference>
<dbReference type="InterPro" id="IPR002172">
    <property type="entry name" value="LDrepeatLR_classA_rpt"/>
</dbReference>
<dbReference type="PANTHER" id="PTHR24270:SF27">
    <property type="entry name" value="CD320 ANTIGEN"/>
    <property type="match status" value="1"/>
</dbReference>
<dbReference type="PANTHER" id="PTHR24270">
    <property type="entry name" value="LOW-DENSITY LIPOPROTEIN RECEPTOR-RELATED"/>
    <property type="match status" value="1"/>
</dbReference>
<dbReference type="Pfam" id="PF00057">
    <property type="entry name" value="Ldl_recept_a"/>
    <property type="match status" value="2"/>
</dbReference>
<dbReference type="PRINTS" id="PR00261">
    <property type="entry name" value="LDLRECEPTOR"/>
</dbReference>
<dbReference type="SMART" id="SM00192">
    <property type="entry name" value="LDLa"/>
    <property type="match status" value="2"/>
</dbReference>
<dbReference type="SUPFAM" id="SSF57424">
    <property type="entry name" value="LDL receptor-like module"/>
    <property type="match status" value="2"/>
</dbReference>
<dbReference type="PROSITE" id="PS01209">
    <property type="entry name" value="LDLRA_1"/>
    <property type="match status" value="2"/>
</dbReference>
<dbReference type="PROSITE" id="PS50068">
    <property type="entry name" value="LDLRA_2"/>
    <property type="match status" value="2"/>
</dbReference>
<reference key="1">
    <citation type="submission" date="2007-07" db="EMBL/GenBank/DDBJ databases">
        <authorList>
            <consortium name="NIH - Mammalian Gene Collection (MGC) project"/>
        </authorList>
    </citation>
    <scope>NUCLEOTIDE SEQUENCE [LARGE SCALE MRNA]</scope>
    <source>
        <strain>Hereford</strain>
        <tissue>Basal ganglia</tissue>
    </source>
</reference>
<name>CD320_BOVIN</name>
<evidence type="ECO:0000250" key="1">
    <source>
        <dbReference type="UniProtKB" id="Q9NPF0"/>
    </source>
</evidence>
<evidence type="ECO:0000255" key="2"/>
<evidence type="ECO:0000255" key="3">
    <source>
        <dbReference type="PROSITE-ProRule" id="PRU00124"/>
    </source>
</evidence>
<evidence type="ECO:0000305" key="4"/>
<feature type="signal peptide" evidence="2">
    <location>
        <begin position="1"/>
        <end position="29"/>
    </location>
</feature>
<feature type="chain" id="PRO_0000354051" description="CD320 antigen">
    <location>
        <begin position="30"/>
        <end position="255"/>
    </location>
</feature>
<feature type="topological domain" description="Extracellular" evidence="2">
    <location>
        <begin position="30"/>
        <end position="203"/>
    </location>
</feature>
<feature type="transmembrane region" description="Helical" evidence="2">
    <location>
        <begin position="204"/>
        <end position="224"/>
    </location>
</feature>
<feature type="topological domain" description="Cytoplasmic" evidence="2">
    <location>
        <begin position="225"/>
        <end position="255"/>
    </location>
</feature>
<feature type="domain" description="LDL-receptor class A 1" evidence="3">
    <location>
        <begin position="52"/>
        <end position="89"/>
    </location>
</feature>
<feature type="domain" description="LDL-receptor class A 2" evidence="3">
    <location>
        <begin position="120"/>
        <end position="157"/>
    </location>
</feature>
<feature type="binding site" evidence="1">
    <location>
        <position position="71"/>
    </location>
    <ligand>
        <name>Ca(2+)</name>
        <dbReference type="ChEBI" id="CHEBI:29108"/>
        <label>1</label>
    </ligand>
</feature>
<feature type="binding site" evidence="1">
    <location>
        <position position="74"/>
    </location>
    <ligand>
        <name>Ca(2+)</name>
        <dbReference type="ChEBI" id="CHEBI:29108"/>
        <label>1</label>
    </ligand>
</feature>
<feature type="binding site" evidence="1">
    <location>
        <position position="76"/>
    </location>
    <ligand>
        <name>Ca(2+)</name>
        <dbReference type="ChEBI" id="CHEBI:29108"/>
        <label>1</label>
    </ligand>
</feature>
<feature type="binding site" evidence="1">
    <location>
        <position position="78"/>
    </location>
    <ligand>
        <name>Ca(2+)</name>
        <dbReference type="ChEBI" id="CHEBI:29108"/>
        <label>1</label>
    </ligand>
</feature>
<feature type="binding site" evidence="1">
    <location>
        <position position="84"/>
    </location>
    <ligand>
        <name>Ca(2+)</name>
        <dbReference type="ChEBI" id="CHEBI:29108"/>
        <label>1</label>
    </ligand>
</feature>
<feature type="binding site" evidence="1">
    <location>
        <position position="85"/>
    </location>
    <ligand>
        <name>Ca(2+)</name>
        <dbReference type="ChEBI" id="CHEBI:29108"/>
        <label>1</label>
    </ligand>
</feature>
<feature type="binding site" evidence="1">
    <location>
        <position position="139"/>
    </location>
    <ligand>
        <name>Ca(2+)</name>
        <dbReference type="ChEBI" id="CHEBI:29108"/>
        <label>2</label>
    </ligand>
</feature>
<feature type="binding site" evidence="1">
    <location>
        <position position="142"/>
    </location>
    <ligand>
        <name>Ca(2+)</name>
        <dbReference type="ChEBI" id="CHEBI:29108"/>
        <label>2</label>
    </ligand>
</feature>
<feature type="binding site" evidence="1">
    <location>
        <position position="144"/>
    </location>
    <ligand>
        <name>Ca(2+)</name>
        <dbReference type="ChEBI" id="CHEBI:29108"/>
        <label>2</label>
    </ligand>
</feature>
<feature type="binding site" evidence="1">
    <location>
        <position position="146"/>
    </location>
    <ligand>
        <name>Ca(2+)</name>
        <dbReference type="ChEBI" id="CHEBI:29108"/>
        <label>2</label>
    </ligand>
</feature>
<feature type="binding site" evidence="1">
    <location>
        <position position="152"/>
    </location>
    <ligand>
        <name>Ca(2+)</name>
        <dbReference type="ChEBI" id="CHEBI:29108"/>
        <label>2</label>
    </ligand>
</feature>
<feature type="binding site" evidence="1">
    <location>
        <position position="153"/>
    </location>
    <ligand>
        <name>Ca(2+)</name>
        <dbReference type="ChEBI" id="CHEBI:29108"/>
        <label>2</label>
    </ligand>
</feature>
<feature type="glycosylation site" description="N-linked (GlcNAc...) asparagine" evidence="2">
    <location>
        <position position="177"/>
    </location>
</feature>
<feature type="glycosylation site" description="N-linked (GlcNAc...) asparagine" evidence="2">
    <location>
        <position position="183"/>
    </location>
</feature>
<feature type="disulfide bond" evidence="3">
    <location>
        <begin position="53"/>
        <end position="66"/>
    </location>
</feature>
<feature type="disulfide bond" evidence="3">
    <location>
        <begin position="60"/>
        <end position="79"/>
    </location>
</feature>
<feature type="disulfide bond" evidence="3">
    <location>
        <begin position="73"/>
        <end position="88"/>
    </location>
</feature>
<feature type="disulfide bond" evidence="3">
    <location>
        <begin position="121"/>
        <end position="134"/>
    </location>
</feature>
<feature type="disulfide bond" evidence="3">
    <location>
        <begin position="128"/>
        <end position="147"/>
    </location>
</feature>
<feature type="disulfide bond" evidence="3">
    <location>
        <begin position="141"/>
        <end position="156"/>
    </location>
</feature>